<accession>B3PGD6</accession>
<protein>
    <recommendedName>
        <fullName evidence="1">UPF0246 protein CJA_0191</fullName>
    </recommendedName>
</protein>
<organism>
    <name type="scientific">Cellvibrio japonicus (strain Ueda107)</name>
    <name type="common">Pseudomonas fluorescens subsp. cellulosa</name>
    <dbReference type="NCBI Taxonomy" id="498211"/>
    <lineage>
        <taxon>Bacteria</taxon>
        <taxon>Pseudomonadati</taxon>
        <taxon>Pseudomonadota</taxon>
        <taxon>Gammaproteobacteria</taxon>
        <taxon>Cellvibrionales</taxon>
        <taxon>Cellvibrionaceae</taxon>
        <taxon>Cellvibrio</taxon>
    </lineage>
</organism>
<gene>
    <name type="ordered locus">CJA_0191</name>
</gene>
<feature type="chain" id="PRO_1000131107" description="UPF0246 protein CJA_0191">
    <location>
        <begin position="1"/>
        <end position="258"/>
    </location>
</feature>
<reference key="1">
    <citation type="journal article" date="2008" name="J. Bacteriol.">
        <title>Insights into plant cell wall degradation from the genome sequence of the soil bacterium Cellvibrio japonicus.</title>
        <authorList>
            <person name="DeBoy R.T."/>
            <person name="Mongodin E.F."/>
            <person name="Fouts D.E."/>
            <person name="Tailford L.E."/>
            <person name="Khouri H."/>
            <person name="Emerson J.B."/>
            <person name="Mohamoud Y."/>
            <person name="Watkins K."/>
            <person name="Henrissat B."/>
            <person name="Gilbert H.J."/>
            <person name="Nelson K.E."/>
        </authorList>
    </citation>
    <scope>NUCLEOTIDE SEQUENCE [LARGE SCALE GENOMIC DNA]</scope>
    <source>
        <strain>Ueda107</strain>
    </source>
</reference>
<comment type="similarity">
    <text evidence="1">Belongs to the UPF0246 family.</text>
</comment>
<name>Y191_CELJU</name>
<dbReference type="EMBL" id="CP000934">
    <property type="protein sequence ID" value="ACE85453.1"/>
    <property type="molecule type" value="Genomic_DNA"/>
</dbReference>
<dbReference type="RefSeq" id="WP_012485874.1">
    <property type="nucleotide sequence ID" value="NC_010995.1"/>
</dbReference>
<dbReference type="SMR" id="B3PGD6"/>
<dbReference type="STRING" id="498211.CJA_0191"/>
<dbReference type="KEGG" id="cja:CJA_0191"/>
<dbReference type="eggNOG" id="COG3022">
    <property type="taxonomic scope" value="Bacteria"/>
</dbReference>
<dbReference type="HOGENOM" id="CLU_061989_0_0_6"/>
<dbReference type="OrthoDB" id="9777133at2"/>
<dbReference type="Proteomes" id="UP000001036">
    <property type="component" value="Chromosome"/>
</dbReference>
<dbReference type="GO" id="GO:0005829">
    <property type="term" value="C:cytosol"/>
    <property type="evidence" value="ECO:0007669"/>
    <property type="project" value="TreeGrafter"/>
</dbReference>
<dbReference type="GO" id="GO:0033194">
    <property type="term" value="P:response to hydroperoxide"/>
    <property type="evidence" value="ECO:0007669"/>
    <property type="project" value="TreeGrafter"/>
</dbReference>
<dbReference type="HAMAP" id="MF_00652">
    <property type="entry name" value="UPF0246"/>
    <property type="match status" value="1"/>
</dbReference>
<dbReference type="InterPro" id="IPR005583">
    <property type="entry name" value="YaaA"/>
</dbReference>
<dbReference type="NCBIfam" id="NF002541">
    <property type="entry name" value="PRK02101.1-1"/>
    <property type="match status" value="1"/>
</dbReference>
<dbReference type="NCBIfam" id="NF002542">
    <property type="entry name" value="PRK02101.1-3"/>
    <property type="match status" value="1"/>
</dbReference>
<dbReference type="PANTHER" id="PTHR30283:SF4">
    <property type="entry name" value="PEROXIDE STRESS RESISTANCE PROTEIN YAAA"/>
    <property type="match status" value="1"/>
</dbReference>
<dbReference type="PANTHER" id="PTHR30283">
    <property type="entry name" value="PEROXIDE STRESS RESPONSE PROTEIN YAAA"/>
    <property type="match status" value="1"/>
</dbReference>
<dbReference type="Pfam" id="PF03883">
    <property type="entry name" value="H2O2_YaaD"/>
    <property type="match status" value="1"/>
</dbReference>
<keyword id="KW-1185">Reference proteome</keyword>
<proteinExistence type="inferred from homology"/>
<evidence type="ECO:0000255" key="1">
    <source>
        <dbReference type="HAMAP-Rule" id="MF_00652"/>
    </source>
</evidence>
<sequence length="258" mass="29731">MLHVISPAKTLDFETPPITRHFTQPQFLDHAQQLIDELRPLNPQQVSELMDISEKLGVLNAQRFLDWQLPFTTENAKQAVLAFKGDVYTGMQADRFSSQDLAWAQQRLRILSGLYGLLRPLDLIQPYRLEMGTHFANSRGKNLYEFWGNRLTEQLNRELAQAPQPLLVNLASNEYWGAVQARHLSGEVITPTFKDRKNGQYKIISFFAKKARGMMSAWIIQQRLDQAEGLKDFNSAGYRYNPAMSSAREWVFTREEPV</sequence>